<comment type="function">
    <text evidence="2">Involved in mitotic DNA repair and meiotic recombination. Functions in the recombinational DNA repair pathway. Essential for interhomolog gene conversion (GC), but may have a less important role in intersister GC than spn-A/Rad51. In the presence of DNA, spn-A/Rad51 enhances the ATPase activity of okr/Rad54 (By similarity).</text>
</comment>
<comment type="subunit">
    <text evidence="1">Interacts (via N-terminus) with spn-A/Rad51.</text>
</comment>
<comment type="subcellular location">
    <subcellularLocation>
        <location evidence="2">Nucleus</location>
    </subcellularLocation>
</comment>
<comment type="similarity">
    <text evidence="3">Belongs to the SNF2/RAD54 helicase family.</text>
</comment>
<accession>B4JCS7</accession>
<name>RAD54_DROGR</name>
<reference evidence="7" key="1">
    <citation type="journal article" date="2007" name="Nature">
        <title>Evolution of genes and genomes on the Drosophila phylogeny.</title>
        <authorList>
            <consortium name="Drosophila 12 genomes consortium"/>
        </authorList>
    </citation>
    <scope>NUCLEOTIDE SEQUENCE [LARGE SCALE GENOMIC DNA]</scope>
    <source>
        <strain evidence="7">Tucson 15287-2541.00</strain>
    </source>
</reference>
<feature type="chain" id="PRO_0000392521" description="DNA repair and recombination protein RAD54-like">
    <location>
        <begin position="1"/>
        <end position="786"/>
    </location>
</feature>
<feature type="domain" description="Helicase ATP-binding" evidence="4">
    <location>
        <begin position="165"/>
        <end position="340"/>
    </location>
</feature>
<feature type="domain" description="Helicase C-terminal" evidence="5">
    <location>
        <begin position="497"/>
        <end position="654"/>
    </location>
</feature>
<feature type="region of interest" description="Required for chromatin remodeling, strand pairing activities and coupling of ATPase activity" evidence="2">
    <location>
        <begin position="2"/>
        <end position="9"/>
    </location>
</feature>
<feature type="region of interest" description="Disordered" evidence="6">
    <location>
        <begin position="738"/>
        <end position="786"/>
    </location>
</feature>
<feature type="short sequence motif" description="DEGH box" evidence="3">
    <location>
        <begin position="291"/>
        <end position="294"/>
    </location>
</feature>
<feature type="compositionally biased region" description="Polar residues" evidence="6">
    <location>
        <begin position="776"/>
        <end position="786"/>
    </location>
</feature>
<feature type="binding site" evidence="4">
    <location>
        <begin position="178"/>
        <end position="185"/>
    </location>
    <ligand>
        <name>ATP</name>
        <dbReference type="ChEBI" id="CHEBI:30616"/>
    </ligand>
</feature>
<feature type="modified residue" description="Phosphothreonine" evidence="2">
    <location>
        <position position="22"/>
    </location>
</feature>
<sequence>MRRSLAPSQRLGVRIKSKDAFTPPLLKKNKRACQQELEKRQSALRDATNIVELPLPIRFTANSEYEQAIAKVLARKFKVPIANYVPDYGGNRSLGVRRSIVRRALHDPLACNALVLFTPPVYTEHERMSLDPSKLQVHVVVDPLLSNVLRPHQREGVRFMYECVEGKRGSFNGCIMADEMGLGKTLQCVTLTWTLLRQSADCKPTISKAIVVSPSSLVKNWEKEFTKWLHGRMHCLAMEGGSKEETTRTLEQFAMNTSTRCGTPVLLISYETFRLYAHILCKTEVGMVICDEGHRLKNSDNLTYQALMGLKTKRRVLLSGTPIQNDLTEYFSLVNFVNPEMLGTATDFKRNFENAILRGQNADSTDTERERALLKTQELIGLVNQCIIRRTNQILTKYLPVKFEMVVCAKLTAVQLQIYTNFLKSDQVCRSLADCNEKTSLTALSDITTLKKLCNHPDLIYEKLAAREKGFENSQNVLPANYKPKDINPELSGKFMLLDFMLAAIRANSDDKVVLISNYTQTLDLFEQLARKRKYSYVRLDGTMTIKKRSKVVDRFNDPSSDCFLFMLSSKAGGCGLNLIGANRLFMFDPDWNPANDEQAMARVWRDGQKKPCYIYRLVASGSIEEKILQRQTHKKSLSSTIIDNNESVEKHFTRDDLKDLFSFEANVLSDTHNKLKCKRCFQDVQRQPPADNTDCTSHLSQWFHCSNNRGLPDTILSQAWTASKCVSFVFHHRSQAEAKPAATTTDEDEELSDSKRKAKKTLASDDDDDEDFVLNCSSGEEFSGF</sequence>
<organism>
    <name type="scientific">Drosophila grimshawi</name>
    <name type="common">Hawaiian fruit fly</name>
    <name type="synonym">Idiomyia grimshawi</name>
    <dbReference type="NCBI Taxonomy" id="7222"/>
    <lineage>
        <taxon>Eukaryota</taxon>
        <taxon>Metazoa</taxon>
        <taxon>Ecdysozoa</taxon>
        <taxon>Arthropoda</taxon>
        <taxon>Hexapoda</taxon>
        <taxon>Insecta</taxon>
        <taxon>Pterygota</taxon>
        <taxon>Neoptera</taxon>
        <taxon>Endopterygota</taxon>
        <taxon>Diptera</taxon>
        <taxon>Brachycera</taxon>
        <taxon>Muscomorpha</taxon>
        <taxon>Ephydroidea</taxon>
        <taxon>Drosophilidae</taxon>
        <taxon>Drosophila</taxon>
        <taxon>Hawaiian Drosophila</taxon>
    </lineage>
</organism>
<evidence type="ECO:0000250" key="1"/>
<evidence type="ECO:0000250" key="2">
    <source>
        <dbReference type="UniProtKB" id="O76460"/>
    </source>
</evidence>
<evidence type="ECO:0000255" key="3"/>
<evidence type="ECO:0000255" key="4">
    <source>
        <dbReference type="PROSITE-ProRule" id="PRU00541"/>
    </source>
</evidence>
<evidence type="ECO:0000255" key="5">
    <source>
        <dbReference type="PROSITE-ProRule" id="PRU00542"/>
    </source>
</evidence>
<evidence type="ECO:0000256" key="6">
    <source>
        <dbReference type="SAM" id="MobiDB-lite"/>
    </source>
</evidence>
<evidence type="ECO:0000312" key="7">
    <source>
        <dbReference type="EMBL" id="EDW03166.1"/>
    </source>
</evidence>
<dbReference type="EC" id="3.6.4.-"/>
<dbReference type="EMBL" id="CH916368">
    <property type="protein sequence ID" value="EDW03166.1"/>
    <property type="molecule type" value="Genomic_DNA"/>
</dbReference>
<dbReference type="SMR" id="B4JCS7"/>
<dbReference type="FunCoup" id="B4JCS7">
    <property type="interactions" value="1194"/>
</dbReference>
<dbReference type="STRING" id="7222.B4JCS7"/>
<dbReference type="EnsemblMetazoa" id="FBtr0146056">
    <property type="protein sequence ID" value="FBpp0144548"/>
    <property type="gene ID" value="FBgn0118123"/>
</dbReference>
<dbReference type="EnsemblMetazoa" id="XM_001988263.2">
    <property type="protein sequence ID" value="XP_001988299.1"/>
    <property type="gene ID" value="LOC6562163"/>
</dbReference>
<dbReference type="GeneID" id="6562163"/>
<dbReference type="KEGG" id="dgr:6562163"/>
<dbReference type="CTD" id="33507"/>
<dbReference type="eggNOG" id="KOG0390">
    <property type="taxonomic scope" value="Eukaryota"/>
</dbReference>
<dbReference type="HOGENOM" id="CLU_000315_10_5_1"/>
<dbReference type="InParanoid" id="B4JCS7"/>
<dbReference type="OMA" id="YTEHERM"/>
<dbReference type="OrthoDB" id="413460at2759"/>
<dbReference type="PhylomeDB" id="B4JCS7"/>
<dbReference type="ChiTaRS" id="okr">
    <property type="organism name" value="fly"/>
</dbReference>
<dbReference type="Proteomes" id="UP000001070">
    <property type="component" value="Unassembled WGS sequence"/>
</dbReference>
<dbReference type="GO" id="GO:0005634">
    <property type="term" value="C:nucleus"/>
    <property type="evidence" value="ECO:0000250"/>
    <property type="project" value="UniProtKB"/>
</dbReference>
<dbReference type="GO" id="GO:0005524">
    <property type="term" value="F:ATP binding"/>
    <property type="evidence" value="ECO:0007669"/>
    <property type="project" value="UniProtKB-KW"/>
</dbReference>
<dbReference type="GO" id="GO:0016887">
    <property type="term" value="F:ATP hydrolysis activity"/>
    <property type="evidence" value="ECO:0007669"/>
    <property type="project" value="EnsemblMetazoa"/>
</dbReference>
<dbReference type="GO" id="GO:0140658">
    <property type="term" value="F:ATP-dependent chromatin remodeler activity"/>
    <property type="evidence" value="ECO:0007669"/>
    <property type="project" value="EnsemblMetazoa"/>
</dbReference>
<dbReference type="GO" id="GO:0003677">
    <property type="term" value="F:DNA binding"/>
    <property type="evidence" value="ECO:0007669"/>
    <property type="project" value="UniProtKB-KW"/>
</dbReference>
<dbReference type="GO" id="GO:0015616">
    <property type="term" value="F:DNA translocase activity"/>
    <property type="evidence" value="ECO:0007669"/>
    <property type="project" value="TreeGrafter"/>
</dbReference>
<dbReference type="GO" id="GO:0004386">
    <property type="term" value="F:helicase activity"/>
    <property type="evidence" value="ECO:0007669"/>
    <property type="project" value="UniProtKB-KW"/>
</dbReference>
<dbReference type="GO" id="GO:0051301">
    <property type="term" value="P:cell division"/>
    <property type="evidence" value="ECO:0007669"/>
    <property type="project" value="UniProtKB-KW"/>
</dbReference>
<dbReference type="GO" id="GO:0006338">
    <property type="term" value="P:chromatin remodeling"/>
    <property type="evidence" value="ECO:0000250"/>
    <property type="project" value="UniProtKB"/>
</dbReference>
<dbReference type="GO" id="GO:0043150">
    <property type="term" value="P:DNA synthesis involved in double-strand break repair via homologous recombination"/>
    <property type="evidence" value="ECO:0000250"/>
    <property type="project" value="UniProtKB"/>
</dbReference>
<dbReference type="GO" id="GO:0000724">
    <property type="term" value="P:double-strand break repair via homologous recombination"/>
    <property type="evidence" value="ECO:0000250"/>
    <property type="project" value="UniProtKB"/>
</dbReference>
<dbReference type="GO" id="GO:0045003">
    <property type="term" value="P:double-strand break repair via synthesis-dependent strand annealing"/>
    <property type="evidence" value="ECO:0007669"/>
    <property type="project" value="EnsemblMetazoa"/>
</dbReference>
<dbReference type="GO" id="GO:0000711">
    <property type="term" value="P:meiotic DNA repair synthesis"/>
    <property type="evidence" value="ECO:0000250"/>
    <property type="project" value="UniProtKB"/>
</dbReference>
<dbReference type="GO" id="GO:0030716">
    <property type="term" value="P:oocyte fate determination"/>
    <property type="evidence" value="ECO:0007669"/>
    <property type="project" value="EnsemblMetazoa"/>
</dbReference>
<dbReference type="GO" id="GO:0048477">
    <property type="term" value="P:oogenesis"/>
    <property type="evidence" value="ECO:0007669"/>
    <property type="project" value="EnsemblMetazoa"/>
</dbReference>
<dbReference type="GO" id="GO:0007131">
    <property type="term" value="P:reciprocal meiotic recombination"/>
    <property type="evidence" value="ECO:0007669"/>
    <property type="project" value="EnsemblMetazoa"/>
</dbReference>
<dbReference type="GO" id="GO:0010212">
    <property type="term" value="P:response to ionizing radiation"/>
    <property type="evidence" value="ECO:0000250"/>
    <property type="project" value="UniProtKB"/>
</dbReference>
<dbReference type="CDD" id="cd18793">
    <property type="entry name" value="SF2_C_SNF"/>
    <property type="match status" value="1"/>
</dbReference>
<dbReference type="FunFam" id="3.40.50.10810:FF:000010">
    <property type="entry name" value="DNA repair and recombination protein RAD54-like"/>
    <property type="match status" value="1"/>
</dbReference>
<dbReference type="FunFam" id="3.40.50.300:FF:000332">
    <property type="entry name" value="DNA repair and recombination protein RAD54-like"/>
    <property type="match status" value="1"/>
</dbReference>
<dbReference type="Gene3D" id="3.40.50.300">
    <property type="entry name" value="P-loop containing nucleotide triphosphate hydrolases"/>
    <property type="match status" value="1"/>
</dbReference>
<dbReference type="Gene3D" id="1.20.120.850">
    <property type="entry name" value="SWI2/SNF2 ATPases, N-terminal domain"/>
    <property type="match status" value="1"/>
</dbReference>
<dbReference type="Gene3D" id="3.40.50.10810">
    <property type="entry name" value="Tandem AAA-ATPase domain"/>
    <property type="match status" value="1"/>
</dbReference>
<dbReference type="InterPro" id="IPR014001">
    <property type="entry name" value="Helicase_ATP-bd"/>
</dbReference>
<dbReference type="InterPro" id="IPR001650">
    <property type="entry name" value="Helicase_C-like"/>
</dbReference>
<dbReference type="InterPro" id="IPR027417">
    <property type="entry name" value="P-loop_NTPase"/>
</dbReference>
<dbReference type="InterPro" id="IPR013967">
    <property type="entry name" value="Rad54_N"/>
</dbReference>
<dbReference type="InterPro" id="IPR038718">
    <property type="entry name" value="SNF2-like_sf"/>
</dbReference>
<dbReference type="InterPro" id="IPR049730">
    <property type="entry name" value="SNF2/RAD54-like_C"/>
</dbReference>
<dbReference type="InterPro" id="IPR000330">
    <property type="entry name" value="SNF2_N"/>
</dbReference>
<dbReference type="InterPro" id="IPR050496">
    <property type="entry name" value="SNF2_RAD54_helicase_repair"/>
</dbReference>
<dbReference type="PANTHER" id="PTHR45629:SF7">
    <property type="entry name" value="DNA EXCISION REPAIR PROTEIN ERCC-6-RELATED"/>
    <property type="match status" value="1"/>
</dbReference>
<dbReference type="PANTHER" id="PTHR45629">
    <property type="entry name" value="SNF2/RAD54 FAMILY MEMBER"/>
    <property type="match status" value="1"/>
</dbReference>
<dbReference type="Pfam" id="PF00271">
    <property type="entry name" value="Helicase_C"/>
    <property type="match status" value="1"/>
</dbReference>
<dbReference type="Pfam" id="PF08658">
    <property type="entry name" value="Rad54_N"/>
    <property type="match status" value="1"/>
</dbReference>
<dbReference type="Pfam" id="PF00176">
    <property type="entry name" value="SNF2-rel_dom"/>
    <property type="match status" value="1"/>
</dbReference>
<dbReference type="SMART" id="SM00487">
    <property type="entry name" value="DEXDc"/>
    <property type="match status" value="1"/>
</dbReference>
<dbReference type="SMART" id="SM00490">
    <property type="entry name" value="HELICc"/>
    <property type="match status" value="1"/>
</dbReference>
<dbReference type="SUPFAM" id="SSF52540">
    <property type="entry name" value="P-loop containing nucleoside triphosphate hydrolases"/>
    <property type="match status" value="2"/>
</dbReference>
<dbReference type="PROSITE" id="PS51192">
    <property type="entry name" value="HELICASE_ATP_BIND_1"/>
    <property type="match status" value="1"/>
</dbReference>
<dbReference type="PROSITE" id="PS51194">
    <property type="entry name" value="HELICASE_CTER"/>
    <property type="match status" value="1"/>
</dbReference>
<keyword id="KW-0067">ATP-binding</keyword>
<keyword id="KW-0131">Cell cycle</keyword>
<keyword id="KW-0132">Cell division</keyword>
<keyword id="KW-0227">DNA damage</keyword>
<keyword id="KW-0234">DNA repair</keyword>
<keyword id="KW-0238">DNA-binding</keyword>
<keyword id="KW-0347">Helicase</keyword>
<keyword id="KW-0378">Hydrolase</keyword>
<keyword id="KW-0469">Meiosis</keyword>
<keyword id="KW-0498">Mitosis</keyword>
<keyword id="KW-0547">Nucleotide-binding</keyword>
<keyword id="KW-0539">Nucleus</keyword>
<keyword id="KW-0597">Phosphoprotein</keyword>
<keyword id="KW-1185">Reference proteome</keyword>
<proteinExistence type="inferred from homology"/>
<gene>
    <name evidence="2" type="primary">okr</name>
    <name type="ORF">GH10642</name>
</gene>
<protein>
    <recommendedName>
        <fullName evidence="2">DNA repair and recombination protein RAD54-like</fullName>
        <ecNumber>3.6.4.-</ecNumber>
    </recommendedName>
    <alternativeName>
        <fullName evidence="2">Protein okra</fullName>
    </alternativeName>
</protein>